<keyword id="KW-0963">Cytoplasm</keyword>
<keyword id="KW-1017">Isopeptide bond</keyword>
<keyword id="KW-0539">Nucleus</keyword>
<keyword id="KW-1185">Reference proteome</keyword>
<keyword id="KW-0687">Ribonucleoprotein</keyword>
<keyword id="KW-0689">Ribosomal protein</keyword>
<keyword id="KW-0832">Ubl conjugation</keyword>
<accession>P0CH35</accession>
<accession>O82079</accession>
<accession>P03993</accession>
<accession>P35296</accession>
<accession>P69321</accession>
<accession>Q652Q2</accession>
<accession>Q67UR4</accession>
<accession>Q69P70</accession>
<accession>Q6ATC2</accession>
<accession>Q7XN78</accession>
<accession>Q8S5Y3</accession>
<accession>Q9AR09</accession>
<protein>
    <recommendedName>
        <fullName evidence="3">Ubiquitin-ribosomal protein eL40y fusion protein</fullName>
    </recommendedName>
    <component>
        <recommendedName>
            <fullName>Ubiquitin</fullName>
        </recommendedName>
    </component>
    <component>
        <recommendedName>
            <fullName evidence="3">Large ribosomal subunit protein eL40y</fullName>
        </recommendedName>
        <alternativeName>
            <fullName>60S ribosomal protein L40-2</fullName>
        </alternativeName>
        <alternativeName>
            <fullName>CEP52</fullName>
        </alternativeName>
    </component>
</protein>
<sequence>MQIFVKTLTGKTITLEVESSDTIDNVKAKIQDKEGIPPDQQRLIFAGKQLEDGRTLADYNIQKESTLHLVLRLRGGIIEPSLQALARKYNQDKMICRKCYARLHPRAVNCRKKKCGHSNQLRPKKKIKN</sequence>
<evidence type="ECO:0000250" key="1"/>
<evidence type="ECO:0000255" key="2">
    <source>
        <dbReference type="PROSITE-ProRule" id="PRU00214"/>
    </source>
</evidence>
<evidence type="ECO:0000305" key="3"/>
<reference key="1">
    <citation type="journal article" date="2001" name="DNA Seq.">
        <title>Isolation and characterization of two genes encoding ubiquitin fused to a ribosomal protein of 53 amino acids in rice.</title>
        <authorList>
            <person name="Kato A."/>
            <person name="Nishi R."/>
            <person name="Ozaki M."/>
        </authorList>
    </citation>
    <scope>NUCLEOTIDE SEQUENCE [GENOMIC DNA]</scope>
</reference>
<reference key="2">
    <citation type="journal article" date="2005" name="Nature">
        <title>The map-based sequence of the rice genome.</title>
        <authorList>
            <consortium name="International rice genome sequencing project (IRGSP)"/>
        </authorList>
    </citation>
    <scope>NUCLEOTIDE SEQUENCE [LARGE SCALE GENOMIC DNA]</scope>
    <source>
        <strain>cv. Nipponbare</strain>
    </source>
</reference>
<reference key="3">
    <citation type="journal article" date="2013" name="Rice">
        <title>Improvement of the Oryza sativa Nipponbare reference genome using next generation sequence and optical map data.</title>
        <authorList>
            <person name="Kawahara Y."/>
            <person name="de la Bastide M."/>
            <person name="Hamilton J.P."/>
            <person name="Kanamori H."/>
            <person name="McCombie W.R."/>
            <person name="Ouyang S."/>
            <person name="Schwartz D.C."/>
            <person name="Tanaka T."/>
            <person name="Wu J."/>
            <person name="Zhou S."/>
            <person name="Childs K.L."/>
            <person name="Davidson R.M."/>
            <person name="Lin H."/>
            <person name="Quesada-Ocampo L."/>
            <person name="Vaillancourt B."/>
            <person name="Sakai H."/>
            <person name="Lee S.S."/>
            <person name="Kim J."/>
            <person name="Numa H."/>
            <person name="Itoh T."/>
            <person name="Buell C.R."/>
            <person name="Matsumoto T."/>
        </authorList>
    </citation>
    <scope>GENOME REANNOTATION</scope>
    <source>
        <strain>cv. Nipponbare</strain>
    </source>
</reference>
<feature type="chain" id="PRO_0000396869" description="Ubiquitin">
    <location>
        <begin position="1"/>
        <end position="76"/>
    </location>
</feature>
<feature type="chain" id="PRO_0000396870" description="Large ribosomal subunit protein eL40y">
    <location>
        <begin position="77"/>
        <end position="129"/>
    </location>
</feature>
<feature type="domain" description="Ubiquitin-like" evidence="2">
    <location>
        <begin position="1"/>
        <end position="76"/>
    </location>
</feature>
<feature type="cross-link" description="Glycyl lysine isopeptide (Lys-Gly) (interchain with G-Cter in ubiquitin)" evidence="1">
    <location>
        <position position="48"/>
    </location>
</feature>
<feature type="cross-link" description="Glycyl lysine isopeptide (Lys-Gly) (interchain with G-Cter in ubiquitin)" evidence="1">
    <location>
        <position position="63"/>
    </location>
</feature>
<feature type="cross-link" description="Glycyl lysine isopeptide (Gly-Lys) (interchain with K-? in acceptor proteins)" evidence="2">
    <location>
        <position position="76"/>
    </location>
</feature>
<comment type="function">
    <molecule>Ubiquitin</molecule>
    <text evidence="1">Exists either covalently attached to another protein, or free (unanchored). When covalently bound, it is conjugated to target proteins via an isopeptide bond either as a monomer (monoubiquitin), a polymer linked via different Lys residues of the ubiquitin (polyubiquitin chains) or a linear polymer linked via the initiator Met of the ubiquitin (linear polyubiquitin chains). Polyubiquitin chains, when attached to a target protein, have different functions depending on the Lys residue of the ubiquitin that is linked: Lys-48-linked is involved in protein degradation via the proteasome; Lys-63-linked is involved in endocytosis, and DNA-damage responses. Linear polymer chains formed via attachment by the initiator Met lead to cell signaling. Ubiquitin is usually conjugated to Lys residues of target proteins, however, in rare cases, conjugation to Cys or Ser residues has been observed. When polyubiquitin is free (unanchored-polyubiquitin), it also has distinct roles, such as in activation of protein kinases, and in signaling (By similarity).</text>
</comment>
<comment type="function">
    <molecule>Large ribosomal subunit protein eL40y</molecule>
    <text>Component of the 60S subunit of the ribosome.</text>
</comment>
<comment type="subunit">
    <molecule>Large ribosomal subunit protein eL40y</molecule>
    <text evidence="1">Part of the 60S ribosomal subunit.</text>
</comment>
<comment type="subcellular location">
    <molecule>Ubiquitin</molecule>
    <subcellularLocation>
        <location evidence="1">Cytoplasm</location>
    </subcellularLocation>
    <subcellularLocation>
        <location evidence="1">Nucleus</location>
    </subcellularLocation>
</comment>
<comment type="subcellular location">
    <molecule>Large ribosomal subunit protein eL40y</molecule>
    <subcellularLocation>
        <location evidence="1">Cytoplasm</location>
    </subcellularLocation>
</comment>
<comment type="miscellaneous">
    <text>Ubiquitin is generally synthesized as a polyubiquitin precursor with tandem head to tail repeats. Often, there are one to three additional amino acids after the last repeat, removed in the mature protein. Alternatively, ubiquitin extension protein is synthesized as a single copy of ubiquitin fused to a ribosomal protein (either eL40 or eS31) or to an ubiquitin-related protein (either RUB1 or RUB2). Following translation, extension protein is cleaved from ubiquitin.</text>
</comment>
<comment type="similarity">
    <text evidence="3">In the N-terminal section; belongs to the ubiquitin family.</text>
</comment>
<comment type="similarity">
    <text evidence="3">In the C-terminal section; belongs to the eukaryotic ribosomal protein eL40 family.</text>
</comment>
<proteinExistence type="inferred from homology"/>
<name>RL40B_ORYSJ</name>
<organism>
    <name type="scientific">Oryza sativa subsp. japonica</name>
    <name type="common">Rice</name>
    <dbReference type="NCBI Taxonomy" id="39947"/>
    <lineage>
        <taxon>Eukaryota</taxon>
        <taxon>Viridiplantae</taxon>
        <taxon>Streptophyta</taxon>
        <taxon>Embryophyta</taxon>
        <taxon>Tracheophyta</taxon>
        <taxon>Spermatophyta</taxon>
        <taxon>Magnoliopsida</taxon>
        <taxon>Liliopsida</taxon>
        <taxon>Poales</taxon>
        <taxon>Poaceae</taxon>
        <taxon>BOP clade</taxon>
        <taxon>Oryzoideae</taxon>
        <taxon>Oryzeae</taxon>
        <taxon>Oryzinae</taxon>
        <taxon>Oryza</taxon>
        <taxon>Oryza sativa</taxon>
    </lineage>
</organism>
<dbReference type="EMBL" id="AB047856">
    <property type="protein sequence ID" value="BAB33150.1"/>
    <property type="molecule type" value="Genomic_DNA"/>
</dbReference>
<dbReference type="EMBL" id="AP005546">
    <property type="protein sequence ID" value="BAD46215.1"/>
    <property type="molecule type" value="Genomic_DNA"/>
</dbReference>
<dbReference type="EMBL" id="AP014965">
    <property type="status" value="NOT_ANNOTATED_CDS"/>
    <property type="molecule type" value="Genomic_DNA"/>
</dbReference>
<dbReference type="RefSeq" id="XP_015629795.1">
    <property type="nucleotide sequence ID" value="XM_015774309.1"/>
</dbReference>
<dbReference type="RefSeq" id="XP_015651280.1">
    <property type="nucleotide sequence ID" value="XM_015795794.1"/>
</dbReference>
<dbReference type="SMR" id="P0CH35"/>
<dbReference type="FunCoup" id="P0CH35">
    <property type="interactions" value="2152"/>
</dbReference>
<dbReference type="STRING" id="39947.P0CH35"/>
<dbReference type="PaxDb" id="39947-P0CH35"/>
<dbReference type="InParanoid" id="P0CH35"/>
<dbReference type="OrthoDB" id="1649877at2759"/>
<dbReference type="Proteomes" id="UP000000763">
    <property type="component" value="Chromosome 9"/>
</dbReference>
<dbReference type="Proteomes" id="UP000059680">
    <property type="component" value="Chromosome 9"/>
</dbReference>
<dbReference type="GO" id="GO:0005737">
    <property type="term" value="C:cytoplasm"/>
    <property type="evidence" value="ECO:0000318"/>
    <property type="project" value="GO_Central"/>
</dbReference>
<dbReference type="GO" id="GO:0005634">
    <property type="term" value="C:nucleus"/>
    <property type="evidence" value="ECO:0000318"/>
    <property type="project" value="GO_Central"/>
</dbReference>
<dbReference type="GO" id="GO:1990904">
    <property type="term" value="C:ribonucleoprotein complex"/>
    <property type="evidence" value="ECO:0007669"/>
    <property type="project" value="UniProtKB-KW"/>
</dbReference>
<dbReference type="GO" id="GO:0005840">
    <property type="term" value="C:ribosome"/>
    <property type="evidence" value="ECO:0007669"/>
    <property type="project" value="UniProtKB-KW"/>
</dbReference>
<dbReference type="GO" id="GO:0003729">
    <property type="term" value="F:mRNA binding"/>
    <property type="evidence" value="ECO:0007669"/>
    <property type="project" value="UniProtKB-ARBA"/>
</dbReference>
<dbReference type="GO" id="GO:0031386">
    <property type="term" value="F:protein tag activity"/>
    <property type="evidence" value="ECO:0000318"/>
    <property type="project" value="GO_Central"/>
</dbReference>
<dbReference type="GO" id="GO:0003735">
    <property type="term" value="F:structural constituent of ribosome"/>
    <property type="evidence" value="ECO:0007669"/>
    <property type="project" value="InterPro"/>
</dbReference>
<dbReference type="GO" id="GO:0031625">
    <property type="term" value="F:ubiquitin protein ligase binding"/>
    <property type="evidence" value="ECO:0000318"/>
    <property type="project" value="GO_Central"/>
</dbReference>
<dbReference type="GO" id="GO:0019941">
    <property type="term" value="P:modification-dependent protein catabolic process"/>
    <property type="evidence" value="ECO:0000318"/>
    <property type="project" value="GO_Central"/>
</dbReference>
<dbReference type="GO" id="GO:0016567">
    <property type="term" value="P:protein ubiquitination"/>
    <property type="evidence" value="ECO:0000318"/>
    <property type="project" value="GO_Central"/>
</dbReference>
<dbReference type="GO" id="GO:0006412">
    <property type="term" value="P:translation"/>
    <property type="evidence" value="ECO:0007669"/>
    <property type="project" value="InterPro"/>
</dbReference>
<dbReference type="CDD" id="cd01803">
    <property type="entry name" value="Ubl_ubiquitin"/>
    <property type="match status" value="1"/>
</dbReference>
<dbReference type="FunFam" id="3.10.20.90:FF:000014">
    <property type="entry name" value="Ubiquitin-60S ribosomal L40 fusion"/>
    <property type="match status" value="1"/>
</dbReference>
<dbReference type="FunFam" id="4.10.1060.50:FF:000001">
    <property type="entry name" value="ubiquitin-60S ribosomal protein L40"/>
    <property type="match status" value="1"/>
</dbReference>
<dbReference type="Gene3D" id="4.10.1060.50">
    <property type="match status" value="1"/>
</dbReference>
<dbReference type="Gene3D" id="3.10.20.90">
    <property type="entry name" value="Phosphatidylinositol 3-kinase Catalytic Subunit, Chain A, domain 1"/>
    <property type="match status" value="1"/>
</dbReference>
<dbReference type="InterPro" id="IPR001975">
    <property type="entry name" value="Ribosomal_eL40_dom"/>
</dbReference>
<dbReference type="InterPro" id="IPR038587">
    <property type="entry name" value="Ribosomal_eL40_sf"/>
</dbReference>
<dbReference type="InterPro" id="IPR000626">
    <property type="entry name" value="Ubiquitin-like_dom"/>
</dbReference>
<dbReference type="InterPro" id="IPR029071">
    <property type="entry name" value="Ubiquitin-like_domsf"/>
</dbReference>
<dbReference type="InterPro" id="IPR019954">
    <property type="entry name" value="Ubiquitin_CS"/>
</dbReference>
<dbReference type="InterPro" id="IPR019956">
    <property type="entry name" value="Ubiquitin_dom"/>
</dbReference>
<dbReference type="InterPro" id="IPR050158">
    <property type="entry name" value="Ubiquitin_ubiquitin-like"/>
</dbReference>
<dbReference type="PANTHER" id="PTHR10666">
    <property type="entry name" value="UBIQUITIN"/>
    <property type="match status" value="1"/>
</dbReference>
<dbReference type="Pfam" id="PF01020">
    <property type="entry name" value="Ribosomal_L40e"/>
    <property type="match status" value="1"/>
</dbReference>
<dbReference type="Pfam" id="PF00240">
    <property type="entry name" value="ubiquitin"/>
    <property type="match status" value="1"/>
</dbReference>
<dbReference type="PRINTS" id="PR00348">
    <property type="entry name" value="UBIQUITIN"/>
</dbReference>
<dbReference type="SMART" id="SM01377">
    <property type="entry name" value="Ribosomal_L40e"/>
    <property type="match status" value="1"/>
</dbReference>
<dbReference type="SMART" id="SM00213">
    <property type="entry name" value="UBQ"/>
    <property type="match status" value="1"/>
</dbReference>
<dbReference type="SUPFAM" id="SSF54236">
    <property type="entry name" value="Ubiquitin-like"/>
    <property type="match status" value="1"/>
</dbReference>
<dbReference type="PROSITE" id="PS00299">
    <property type="entry name" value="UBIQUITIN_1"/>
    <property type="match status" value="1"/>
</dbReference>
<dbReference type="PROSITE" id="PS50053">
    <property type="entry name" value="UBIQUITIN_2"/>
    <property type="match status" value="1"/>
</dbReference>
<gene>
    <name type="primary">Ub-CEP52-2</name>
    <name type="synonym">UBQ2</name>
    <name type="ordered locus">Os09g0568400</name>
    <name type="ordered locus">LOC_Os09g39500</name>
    <name type="ORF">OJ1003_C09.10-1</name>
</gene>